<sequence>MSQLSSTLKRYTESARFTDAPFTKSSYGTYTPSSYGTNLAASFLEKEKFGFKPSPPTSYLTRPRTYGPPSILDYDRGRPLLRPDVIGGGKRAESQTRGTERPSGSGLSGGSGFSYGVTTSSVSYLPVSARDQGVTLTQKKSNSQSDLARDFSSLQTSDSYRLDSGNLGRSPMLARTRKELCALQGLYQAASRSEYLADYLENYGRKASAPQVPTPTPPSRAPEVLSPTYRPSGRYSLWEKGKGQALVSSRSSSPGRDTMNSKSAQGLAGLRNLGNTCFMNSILQCLSNTRELRDYCLQRLYLRDLSHSSRAHTALMEEFAKLIQTIWTSSPNDVVSPSEFKTQIQRYAPRFVGYNQQDAQEFLRFLLDGLHNEVNRVIARPKSNTENLDHLPDDEKGRQMWRKYLEREDSRIGDLFVGQLKSSLTCTDCGYCSTVFDPFWDLSLPITKRGYPEVTLMDCMRLFTKEDVLDGDEKPTCCRCRARKRCIKKFSIQRFPKILVLHLKRFSESRIRTSKLTAFVNFPLRDLDLREFASENTNHAVYNLYAVSNHSGTTMGGHYTAYCRSPVTGEWHTFNDSSVSPMSSSQVRTSDAYLLFYELASPPSRM</sequence>
<feature type="chain" id="PRO_0000395965" description="Ubiquitin carboxyl-terminal hydrolase 2">
    <location>
        <begin position="1"/>
        <end position="606"/>
    </location>
</feature>
<feature type="domain" description="USP">
    <location>
        <begin position="268"/>
        <end position="600"/>
    </location>
</feature>
<feature type="region of interest" description="Necessary for interaction with MDM4" evidence="1">
    <location>
        <begin position="1"/>
        <end position="201"/>
    </location>
</feature>
<feature type="region of interest" description="Disordered" evidence="6">
    <location>
        <begin position="53"/>
        <end position="112"/>
    </location>
</feature>
<feature type="region of interest" description="Disordered" evidence="6">
    <location>
        <begin position="207"/>
        <end position="228"/>
    </location>
</feature>
<feature type="region of interest" description="Necessary for interaction with MDM4" evidence="1">
    <location>
        <begin position="404"/>
        <end position="504"/>
    </location>
</feature>
<feature type="compositionally biased region" description="Basic and acidic residues" evidence="6">
    <location>
        <begin position="90"/>
        <end position="100"/>
    </location>
</feature>
<feature type="active site" description="Nucleophile" evidence="4 5">
    <location>
        <position position="277"/>
    </location>
</feature>
<feature type="active site" description="Proton acceptor" evidence="4 5">
    <location>
        <position position="558"/>
    </location>
</feature>
<feature type="binding site" evidence="1">
    <location>
        <position position="426"/>
    </location>
    <ligand>
        <name>Zn(2+)</name>
        <dbReference type="ChEBI" id="CHEBI:29105"/>
    </ligand>
</feature>
<feature type="binding site" evidence="1">
    <location>
        <position position="429"/>
    </location>
    <ligand>
        <name>Zn(2+)</name>
        <dbReference type="ChEBI" id="CHEBI:29105"/>
    </ligand>
</feature>
<feature type="binding site" evidence="1">
    <location>
        <position position="477"/>
    </location>
    <ligand>
        <name>Zn(2+)</name>
        <dbReference type="ChEBI" id="CHEBI:29105"/>
    </ligand>
</feature>
<feature type="binding site" evidence="1">
    <location>
        <position position="480"/>
    </location>
    <ligand>
        <name>Zn(2+)</name>
        <dbReference type="ChEBI" id="CHEBI:29105"/>
    </ligand>
</feature>
<comment type="function">
    <text evidence="1 2">Hydrolase that deubiquitinates polyubiquitinated target proteins such as MDM2, MDM4 and CCND1. Possesses both ubiquitin-specific peptidase and isopeptidase activities. Deubiquitinates MDM2 without reversing MDM2-mediated p53/TP53 ubiquitination and thus indirectly promotes p53/TP53 degradation and limits p53 activity. Has no deubiquitinase activity against p53/TP53. Prevents MDM2-mediated degradation of MDM4. Plays a role in the G1/S cell-cycle progression in normal and cancer cells. Plays a role in the regulation of myogenic differentiation of embryonic muscle cells. Regulates the circadian clock by modulating its intrinsic circadian rhythm and its capacity to respond to external cues. Associates with clock proteins and deubiquitinates core clock component PER1 but does not affect its overall stability. Regulates the nucleocytoplasmic shuttling and nuclear retention of PER1 and its repressive role on the clock transcription factors CLOCK and BMAL1.</text>
</comment>
<comment type="catalytic activity">
    <reaction>
        <text>Thiol-dependent hydrolysis of ester, thioester, amide, peptide and isopeptide bonds formed by the C-terminal Gly of ubiquitin (a 76-residue protein attached to proteins as an intracellular targeting signal).</text>
        <dbReference type="EC" id="3.4.19.12"/>
    </reaction>
</comment>
<comment type="activity regulation">
    <text evidence="1 3">Cleavage is inhibited by ubiquitin in a dosage-dependent manner. Cleavage is blocked by ubiquitin aldehyde.</text>
</comment>
<comment type="subunit">
    <text evidence="1 2 3">Homooligomer. Found in trimeric complex with MDM2 and MDM4 and USP2. Interacts with CCND1; the interaction is direct and promotes its stabilization by antagonizing ubiquitin-dependent degradation. Interacts (via N-terminus and C-terminus) with MDM2. Interacts with MDM4 and PER1. Interacts with KCNQ1; counteracts the NEDD4L-specific down-regulation of I(Ks) and restores plasma membrane localization of KCNQ1 (By similarity).</text>
</comment>
<comment type="subcellular location">
    <subcellularLocation>
        <location evidence="2">Cytoplasm</location>
    </subcellularLocation>
    <subcellularLocation>
        <location evidence="2">Cytoplasm</location>
        <location evidence="2">Perinuclear region</location>
    </subcellularLocation>
    <text evidence="3">Localizes in the spermatid head in late-elongating spermatids in the thin area between the outer acrosomal membrane and the plasma membrane.</text>
</comment>
<comment type="similarity">
    <text evidence="7">Belongs to the peptidase C19 family. USP2 subfamily.</text>
</comment>
<protein>
    <recommendedName>
        <fullName>Ubiquitin carboxyl-terminal hydrolase 2</fullName>
        <ecNumber>3.4.19.12</ecNumber>
    </recommendedName>
    <alternativeName>
        <fullName>41 kDa ubiquitin-specific protease</fullName>
    </alternativeName>
    <alternativeName>
        <fullName>Deubiquitinating enzyme 2</fullName>
    </alternativeName>
    <alternativeName>
        <fullName>Ubiquitin thioesterase 2</fullName>
    </alternativeName>
    <alternativeName>
        <fullName>Ubiquitin-specific-processing protease 2</fullName>
    </alternativeName>
</protein>
<name>UBP2_BOVIN</name>
<gene>
    <name type="primary">USP2</name>
    <name type="synonym">UBP41</name>
</gene>
<keyword id="KW-0090">Biological rhythms</keyword>
<keyword id="KW-0131">Cell cycle</keyword>
<keyword id="KW-0963">Cytoplasm</keyword>
<keyword id="KW-0378">Hydrolase</keyword>
<keyword id="KW-0479">Metal-binding</keyword>
<keyword id="KW-0517">Myogenesis</keyword>
<keyword id="KW-0645">Protease</keyword>
<keyword id="KW-1185">Reference proteome</keyword>
<keyword id="KW-0788">Thiol protease</keyword>
<keyword id="KW-0833">Ubl conjugation pathway</keyword>
<keyword id="KW-0862">Zinc</keyword>
<keyword id="KW-0863">Zinc-finger</keyword>
<reference key="1">
    <citation type="submission" date="2006-01" db="EMBL/GenBank/DDBJ databases">
        <authorList>
            <consortium name="NIH - Mammalian Gene Collection (MGC) project"/>
        </authorList>
    </citation>
    <scope>NUCLEOTIDE SEQUENCE [LARGE SCALE MRNA]</scope>
    <source>
        <strain>Hereford</strain>
        <tissue>Heart ventricle</tissue>
    </source>
</reference>
<proteinExistence type="evidence at transcript level"/>
<dbReference type="EC" id="3.4.19.12"/>
<dbReference type="EMBL" id="BC112866">
    <property type="protein sequence ID" value="AAI12867.1"/>
    <property type="molecule type" value="mRNA"/>
</dbReference>
<dbReference type="RefSeq" id="NP_001039728.1">
    <property type="nucleotide sequence ID" value="NM_001046263.1"/>
</dbReference>
<dbReference type="RefSeq" id="XP_024831053.1">
    <property type="nucleotide sequence ID" value="XM_024975285.2"/>
</dbReference>
<dbReference type="RefSeq" id="XP_059730729.1">
    <property type="nucleotide sequence ID" value="XM_059874746.1"/>
</dbReference>
<dbReference type="RefSeq" id="XP_059730730.1">
    <property type="nucleotide sequence ID" value="XM_059874747.1"/>
</dbReference>
<dbReference type="SMR" id="Q2KHV7"/>
<dbReference type="FunCoup" id="Q2KHV7">
    <property type="interactions" value="74"/>
</dbReference>
<dbReference type="STRING" id="9913.ENSBTAP00000060377"/>
<dbReference type="MEROPS" id="C19.013"/>
<dbReference type="PaxDb" id="9913-ENSBTAP00000012857"/>
<dbReference type="Ensembl" id="ENSBTAT00000012857.6">
    <property type="protein sequence ID" value="ENSBTAP00000012857.5"/>
    <property type="gene ID" value="ENSBTAG00000009749.7"/>
</dbReference>
<dbReference type="GeneID" id="522980"/>
<dbReference type="KEGG" id="bta:522980"/>
<dbReference type="CTD" id="9099"/>
<dbReference type="VEuPathDB" id="HostDB:ENSBTAG00000009749"/>
<dbReference type="VGNC" id="VGNC:54894">
    <property type="gene designation" value="USP2"/>
</dbReference>
<dbReference type="eggNOG" id="KOG1868">
    <property type="taxonomic scope" value="Eukaryota"/>
</dbReference>
<dbReference type="GeneTree" id="ENSGT00940000161289"/>
<dbReference type="HOGENOM" id="CLU_008279_1_2_1"/>
<dbReference type="InParanoid" id="Q2KHV7"/>
<dbReference type="OrthoDB" id="265306at2759"/>
<dbReference type="TreeFam" id="TF106277"/>
<dbReference type="Reactome" id="R-BTA-5357786">
    <property type="pathway name" value="TNFR1-induced proapoptotic signaling"/>
</dbReference>
<dbReference type="Reactome" id="R-BTA-5357905">
    <property type="pathway name" value="Regulation of TNFR1 signaling"/>
</dbReference>
<dbReference type="Reactome" id="R-BTA-5357956">
    <property type="pathway name" value="TNFR1-induced NF-kappa-B signaling pathway"/>
</dbReference>
<dbReference type="Proteomes" id="UP000009136">
    <property type="component" value="Chromosome 15"/>
</dbReference>
<dbReference type="Bgee" id="ENSBTAG00000009749">
    <property type="expression patterns" value="Expressed in infraspinatus muscle and 100 other cell types or tissues"/>
</dbReference>
<dbReference type="GO" id="GO:0005737">
    <property type="term" value="C:cytoplasm"/>
    <property type="evidence" value="ECO:0000318"/>
    <property type="project" value="GO_Central"/>
</dbReference>
<dbReference type="GO" id="GO:0048471">
    <property type="term" value="C:perinuclear region of cytoplasm"/>
    <property type="evidence" value="ECO:0007669"/>
    <property type="project" value="UniProtKB-SubCell"/>
</dbReference>
<dbReference type="GO" id="GO:0004843">
    <property type="term" value="F:cysteine-type deubiquitinase activity"/>
    <property type="evidence" value="ECO:0007669"/>
    <property type="project" value="UniProtKB-EC"/>
</dbReference>
<dbReference type="GO" id="GO:0008270">
    <property type="term" value="F:zinc ion binding"/>
    <property type="evidence" value="ECO:0007669"/>
    <property type="project" value="UniProtKB-KW"/>
</dbReference>
<dbReference type="GO" id="GO:0048512">
    <property type="term" value="P:circadian behavior"/>
    <property type="evidence" value="ECO:0000250"/>
    <property type="project" value="UniProtKB"/>
</dbReference>
<dbReference type="GO" id="GO:0032922">
    <property type="term" value="P:circadian regulation of gene expression"/>
    <property type="evidence" value="ECO:0000250"/>
    <property type="project" value="UniProtKB"/>
</dbReference>
<dbReference type="GO" id="GO:0043153">
    <property type="term" value="P:entrainment of circadian clock by photoperiod"/>
    <property type="evidence" value="ECO:0000250"/>
    <property type="project" value="UniProtKB"/>
</dbReference>
<dbReference type="GO" id="GO:0045475">
    <property type="term" value="P:locomotor rhythm"/>
    <property type="evidence" value="ECO:0000250"/>
    <property type="project" value="UniProtKB"/>
</dbReference>
<dbReference type="GO" id="GO:0007517">
    <property type="term" value="P:muscle organ development"/>
    <property type="evidence" value="ECO:0007669"/>
    <property type="project" value="UniProtKB-KW"/>
</dbReference>
<dbReference type="GO" id="GO:0000122">
    <property type="term" value="P:negative regulation of transcription by RNA polymerase II"/>
    <property type="evidence" value="ECO:0000250"/>
    <property type="project" value="UniProtKB"/>
</dbReference>
<dbReference type="GO" id="GO:0045931">
    <property type="term" value="P:positive regulation of mitotic cell cycle"/>
    <property type="evidence" value="ECO:0000250"/>
    <property type="project" value="UniProtKB"/>
</dbReference>
<dbReference type="GO" id="GO:0016579">
    <property type="term" value="P:protein deubiquitination"/>
    <property type="evidence" value="ECO:0000250"/>
    <property type="project" value="UniProtKB"/>
</dbReference>
<dbReference type="GO" id="GO:0050821">
    <property type="term" value="P:protein stabilization"/>
    <property type="evidence" value="ECO:0000250"/>
    <property type="project" value="UniProtKB"/>
</dbReference>
<dbReference type="GO" id="GO:0006508">
    <property type="term" value="P:proteolysis"/>
    <property type="evidence" value="ECO:0007669"/>
    <property type="project" value="UniProtKB-KW"/>
</dbReference>
<dbReference type="CDD" id="cd02674">
    <property type="entry name" value="Peptidase_C19R"/>
    <property type="match status" value="1"/>
</dbReference>
<dbReference type="FunFam" id="3.90.70.10:FF:000024">
    <property type="entry name" value="Ubiquitin carboxyl-terminal hydrolase 2"/>
    <property type="match status" value="1"/>
</dbReference>
<dbReference type="Gene3D" id="3.90.70.10">
    <property type="entry name" value="Cysteine proteinases"/>
    <property type="match status" value="1"/>
</dbReference>
<dbReference type="InterPro" id="IPR038765">
    <property type="entry name" value="Papain-like_cys_pep_sf"/>
</dbReference>
<dbReference type="InterPro" id="IPR001394">
    <property type="entry name" value="Peptidase_C19_UCH"/>
</dbReference>
<dbReference type="InterPro" id="IPR050185">
    <property type="entry name" value="Ub_carboxyl-term_hydrolase"/>
</dbReference>
<dbReference type="InterPro" id="IPR018200">
    <property type="entry name" value="USP_CS"/>
</dbReference>
<dbReference type="InterPro" id="IPR028889">
    <property type="entry name" value="USP_dom"/>
</dbReference>
<dbReference type="PANTHER" id="PTHR21646">
    <property type="entry name" value="UBIQUITIN CARBOXYL-TERMINAL HYDROLASE"/>
    <property type="match status" value="1"/>
</dbReference>
<dbReference type="PANTHER" id="PTHR21646:SF17">
    <property type="entry name" value="UBIQUITIN CARBOXYL-TERMINAL HYDROLASE 2"/>
    <property type="match status" value="1"/>
</dbReference>
<dbReference type="Pfam" id="PF00443">
    <property type="entry name" value="UCH"/>
    <property type="match status" value="1"/>
</dbReference>
<dbReference type="SUPFAM" id="SSF54001">
    <property type="entry name" value="Cysteine proteinases"/>
    <property type="match status" value="1"/>
</dbReference>
<dbReference type="PROSITE" id="PS00972">
    <property type="entry name" value="USP_1"/>
    <property type="match status" value="1"/>
</dbReference>
<dbReference type="PROSITE" id="PS00973">
    <property type="entry name" value="USP_2"/>
    <property type="match status" value="1"/>
</dbReference>
<dbReference type="PROSITE" id="PS50235">
    <property type="entry name" value="USP_3"/>
    <property type="match status" value="1"/>
</dbReference>
<accession>Q2KHV7</accession>
<evidence type="ECO:0000250" key="1">
    <source>
        <dbReference type="UniProtKB" id="O75604"/>
    </source>
</evidence>
<evidence type="ECO:0000250" key="2">
    <source>
        <dbReference type="UniProtKB" id="O88623"/>
    </source>
</evidence>
<evidence type="ECO:0000250" key="3">
    <source>
        <dbReference type="UniProtKB" id="Q5U349"/>
    </source>
</evidence>
<evidence type="ECO:0000255" key="4">
    <source>
        <dbReference type="PROSITE-ProRule" id="PRU10092"/>
    </source>
</evidence>
<evidence type="ECO:0000255" key="5">
    <source>
        <dbReference type="PROSITE-ProRule" id="PRU10093"/>
    </source>
</evidence>
<evidence type="ECO:0000256" key="6">
    <source>
        <dbReference type="SAM" id="MobiDB-lite"/>
    </source>
</evidence>
<evidence type="ECO:0000305" key="7"/>
<organism>
    <name type="scientific">Bos taurus</name>
    <name type="common">Bovine</name>
    <dbReference type="NCBI Taxonomy" id="9913"/>
    <lineage>
        <taxon>Eukaryota</taxon>
        <taxon>Metazoa</taxon>
        <taxon>Chordata</taxon>
        <taxon>Craniata</taxon>
        <taxon>Vertebrata</taxon>
        <taxon>Euteleostomi</taxon>
        <taxon>Mammalia</taxon>
        <taxon>Eutheria</taxon>
        <taxon>Laurasiatheria</taxon>
        <taxon>Artiodactyla</taxon>
        <taxon>Ruminantia</taxon>
        <taxon>Pecora</taxon>
        <taxon>Bovidae</taxon>
        <taxon>Bovinae</taxon>
        <taxon>Bos</taxon>
    </lineage>
</organism>